<feature type="chain" id="PRO_0000061005" description="Cytochrome b">
    <location>
        <begin position="1"/>
        <end position="379"/>
    </location>
</feature>
<feature type="transmembrane region" description="Helical" evidence="2">
    <location>
        <begin position="33"/>
        <end position="53"/>
    </location>
</feature>
<feature type="transmembrane region" description="Helical" evidence="2">
    <location>
        <begin position="77"/>
        <end position="98"/>
    </location>
</feature>
<feature type="transmembrane region" description="Helical" evidence="2">
    <location>
        <begin position="113"/>
        <end position="133"/>
    </location>
</feature>
<feature type="transmembrane region" description="Helical" evidence="2">
    <location>
        <begin position="178"/>
        <end position="198"/>
    </location>
</feature>
<feature type="transmembrane region" description="Helical" evidence="2">
    <location>
        <begin position="226"/>
        <end position="246"/>
    </location>
</feature>
<feature type="transmembrane region" description="Helical" evidence="2">
    <location>
        <begin position="288"/>
        <end position="308"/>
    </location>
</feature>
<feature type="transmembrane region" description="Helical" evidence="2">
    <location>
        <begin position="320"/>
        <end position="340"/>
    </location>
</feature>
<feature type="transmembrane region" description="Helical" evidence="2">
    <location>
        <begin position="347"/>
        <end position="367"/>
    </location>
</feature>
<feature type="binding site" description="axial binding residue" evidence="2">
    <location>
        <position position="83"/>
    </location>
    <ligand>
        <name>heme b</name>
        <dbReference type="ChEBI" id="CHEBI:60344"/>
        <label>b562</label>
    </ligand>
    <ligandPart>
        <name>Fe</name>
        <dbReference type="ChEBI" id="CHEBI:18248"/>
    </ligandPart>
</feature>
<feature type="binding site" description="axial binding residue" evidence="2">
    <location>
        <position position="97"/>
    </location>
    <ligand>
        <name>heme b</name>
        <dbReference type="ChEBI" id="CHEBI:60344"/>
        <label>b566</label>
    </ligand>
    <ligandPart>
        <name>Fe</name>
        <dbReference type="ChEBI" id="CHEBI:18248"/>
    </ligandPart>
</feature>
<feature type="binding site" description="axial binding residue" evidence="2">
    <location>
        <position position="182"/>
    </location>
    <ligand>
        <name>heme b</name>
        <dbReference type="ChEBI" id="CHEBI:60344"/>
        <label>b562</label>
    </ligand>
    <ligandPart>
        <name>Fe</name>
        <dbReference type="ChEBI" id="CHEBI:18248"/>
    </ligandPart>
</feature>
<feature type="binding site" description="axial binding residue" evidence="2">
    <location>
        <position position="196"/>
    </location>
    <ligand>
        <name>heme b</name>
        <dbReference type="ChEBI" id="CHEBI:60344"/>
        <label>b566</label>
    </ligand>
    <ligandPart>
        <name>Fe</name>
        <dbReference type="ChEBI" id="CHEBI:18248"/>
    </ligandPart>
</feature>
<feature type="binding site" evidence="2">
    <location>
        <position position="201"/>
    </location>
    <ligand>
        <name>a ubiquinone</name>
        <dbReference type="ChEBI" id="CHEBI:16389"/>
    </ligand>
</feature>
<feature type="sequence variant" description="In strain: Isolate TK 20569.">
    <original>Q</original>
    <variation>H</variation>
    <location>
        <position position="162"/>
    </location>
</feature>
<feature type="sequence variant" description="In strain: Isolate TK 4812.">
    <original>I</original>
    <variation>T</variation>
    <location>
        <position position="371"/>
    </location>
</feature>
<accession>Q8WGG5</accession>
<accession>Q8WGG6</accession>
<accession>Q8WGG7</accession>
<evidence type="ECO:0000250" key="1"/>
<evidence type="ECO:0000250" key="2">
    <source>
        <dbReference type="UniProtKB" id="P00157"/>
    </source>
</evidence>
<evidence type="ECO:0000255" key="3">
    <source>
        <dbReference type="PROSITE-ProRule" id="PRU00967"/>
    </source>
</evidence>
<evidence type="ECO:0000255" key="4">
    <source>
        <dbReference type="PROSITE-ProRule" id="PRU00968"/>
    </source>
</evidence>
<geneLocation type="mitochondrion"/>
<protein>
    <recommendedName>
        <fullName>Cytochrome b</fullName>
    </recommendedName>
    <alternativeName>
        <fullName>Complex III subunit 3</fullName>
    </alternativeName>
    <alternativeName>
        <fullName>Complex III subunit III</fullName>
    </alternativeName>
    <alternativeName>
        <fullName>Cytochrome b-c1 complex subunit 3</fullName>
    </alternativeName>
    <alternativeName>
        <fullName>Ubiquinol-cytochrome-c reductase complex cytochrome b subunit</fullName>
    </alternativeName>
</protein>
<gene>
    <name type="primary">MT-CYB</name>
    <name type="synonym">COB</name>
    <name type="synonym">CYTB</name>
    <name type="synonym">MTCYB</name>
</gene>
<sequence>MTNIRKTHPLLKIINSSFVDLPAPSSLSSWWNFGSLLGVCLAVQILTGLFLAMHYTSDTATAFNSVTHICRDVNYGWVLRYLHANGASMFFICLYLHVGRGLYYGSYMYSETWNIGILLLFAVMATAFMGYVLPWGQMSFWGATVITNLLSAIPYIGTDLVQWIWGGFSVDKATLTRFFAFHFLFPFIVAALVMVHLLFLHETGSNNPTGIPSDSDMIPFHPYYTIKDILGFLIMLTALSALVLFSPDLLGDPDNYMPANPLNTPPHIKPEWYFLFAYAILRSIPNKLGGVLALVLSILVLAIVPMLHTSKQRSMMFRPLSQCLFWFLVAILLTLTWIGGQPVEYPYVIIGQMASVLYFLTILVFMPLVSIMENHLLKW</sequence>
<keyword id="KW-0249">Electron transport</keyword>
<keyword id="KW-0349">Heme</keyword>
<keyword id="KW-0408">Iron</keyword>
<keyword id="KW-0472">Membrane</keyword>
<keyword id="KW-0479">Metal-binding</keyword>
<keyword id="KW-0496">Mitochondrion</keyword>
<keyword id="KW-0999">Mitochondrion inner membrane</keyword>
<keyword id="KW-0679">Respiratory chain</keyword>
<keyword id="KW-0812">Transmembrane</keyword>
<keyword id="KW-1133">Transmembrane helix</keyword>
<keyword id="KW-0813">Transport</keyword>
<keyword id="KW-0830">Ubiquinone</keyword>
<comment type="function">
    <text evidence="2">Component of the ubiquinol-cytochrome c reductase complex (complex III or cytochrome b-c1 complex) that is part of the mitochondrial respiratory chain. The b-c1 complex mediates electron transfer from ubiquinol to cytochrome c. Contributes to the generation of a proton gradient across the mitochondrial membrane that is then used for ATP synthesis.</text>
</comment>
<comment type="cofactor">
    <cofactor evidence="2">
        <name>heme b</name>
        <dbReference type="ChEBI" id="CHEBI:60344"/>
    </cofactor>
    <text evidence="2">Binds 2 heme b groups non-covalently.</text>
</comment>
<comment type="subunit">
    <text evidence="2">The cytochrome bc1 complex contains 11 subunits: 3 respiratory subunits (MT-CYB, CYC1 and UQCRFS1), 2 core proteins (UQCRC1 and UQCRC2) and 6 low-molecular weight proteins (UQCRH/QCR6, UQCRB/QCR7, UQCRQ/QCR8, UQCR10/QCR9, UQCR11/QCR10 and a cleavage product of UQCRFS1). This cytochrome bc1 complex then forms a dimer.</text>
</comment>
<comment type="subcellular location">
    <subcellularLocation>
        <location evidence="2">Mitochondrion inner membrane</location>
        <topology evidence="2">Multi-pass membrane protein</topology>
    </subcellularLocation>
</comment>
<comment type="miscellaneous">
    <text evidence="1">Heme 1 (or BL or b562) is low-potential and absorbs at about 562 nm, and heme 2 (or BH or b566) is high-potential and absorbs at about 566 nm.</text>
</comment>
<comment type="similarity">
    <text evidence="3 4">Belongs to the cytochrome b family.</text>
</comment>
<comment type="caution">
    <text evidence="2">The full-length protein contains only eight transmembrane helices, not nine as predicted by bioinformatics tools.</text>
</comment>
<reference key="1">
    <citation type="journal article" date="2001" name="J. Mammal.">
        <title>Systematics of bats of the genus Glossophaga (Chiroptera: Phyllostomidae) and phylogeography in G. soricina based on the cytochrome b gene.</title>
        <authorList>
            <person name="Hoffmann F.G."/>
            <person name="Baker R.J."/>
        </authorList>
    </citation>
    <scope>NUCLEOTIDE SEQUENCE [GENOMIC DNA]</scope>
    <source>
        <strain>Isolate TK 20567</strain>
        <strain>Isolate TK 20569</strain>
        <strain>Isolate TK 4812</strain>
    </source>
</reference>
<name>CYB_GLOLE</name>
<proteinExistence type="inferred from homology"/>
<dbReference type="EMBL" id="AF382876">
    <property type="protein sequence ID" value="AAL32350.1"/>
    <property type="molecule type" value="Genomic_DNA"/>
</dbReference>
<dbReference type="EMBL" id="AF382877">
    <property type="protein sequence ID" value="AAL32351.1"/>
    <property type="molecule type" value="Genomic_DNA"/>
</dbReference>
<dbReference type="EMBL" id="AF382878">
    <property type="protein sequence ID" value="AAL32352.1"/>
    <property type="molecule type" value="Genomic_DNA"/>
</dbReference>
<dbReference type="SMR" id="Q8WGG5"/>
<dbReference type="GO" id="GO:0005743">
    <property type="term" value="C:mitochondrial inner membrane"/>
    <property type="evidence" value="ECO:0007669"/>
    <property type="project" value="UniProtKB-SubCell"/>
</dbReference>
<dbReference type="GO" id="GO:0045275">
    <property type="term" value="C:respiratory chain complex III"/>
    <property type="evidence" value="ECO:0007669"/>
    <property type="project" value="InterPro"/>
</dbReference>
<dbReference type="GO" id="GO:0046872">
    <property type="term" value="F:metal ion binding"/>
    <property type="evidence" value="ECO:0007669"/>
    <property type="project" value="UniProtKB-KW"/>
</dbReference>
<dbReference type="GO" id="GO:0008121">
    <property type="term" value="F:ubiquinol-cytochrome-c reductase activity"/>
    <property type="evidence" value="ECO:0007669"/>
    <property type="project" value="InterPro"/>
</dbReference>
<dbReference type="GO" id="GO:0006122">
    <property type="term" value="P:mitochondrial electron transport, ubiquinol to cytochrome c"/>
    <property type="evidence" value="ECO:0007669"/>
    <property type="project" value="TreeGrafter"/>
</dbReference>
<dbReference type="CDD" id="cd00290">
    <property type="entry name" value="cytochrome_b_C"/>
    <property type="match status" value="1"/>
</dbReference>
<dbReference type="CDD" id="cd00284">
    <property type="entry name" value="Cytochrome_b_N"/>
    <property type="match status" value="1"/>
</dbReference>
<dbReference type="FunFam" id="1.20.810.10:FF:000002">
    <property type="entry name" value="Cytochrome b"/>
    <property type="match status" value="1"/>
</dbReference>
<dbReference type="Gene3D" id="1.20.810.10">
    <property type="entry name" value="Cytochrome Bc1 Complex, Chain C"/>
    <property type="match status" value="1"/>
</dbReference>
<dbReference type="InterPro" id="IPR005798">
    <property type="entry name" value="Cyt_b/b6_C"/>
</dbReference>
<dbReference type="InterPro" id="IPR036150">
    <property type="entry name" value="Cyt_b/b6_C_sf"/>
</dbReference>
<dbReference type="InterPro" id="IPR005797">
    <property type="entry name" value="Cyt_b/b6_N"/>
</dbReference>
<dbReference type="InterPro" id="IPR027387">
    <property type="entry name" value="Cytb/b6-like_sf"/>
</dbReference>
<dbReference type="InterPro" id="IPR030689">
    <property type="entry name" value="Cytochrome_b"/>
</dbReference>
<dbReference type="InterPro" id="IPR048260">
    <property type="entry name" value="Cytochrome_b_C_euk/bac"/>
</dbReference>
<dbReference type="InterPro" id="IPR048259">
    <property type="entry name" value="Cytochrome_b_N_euk/bac"/>
</dbReference>
<dbReference type="InterPro" id="IPR016174">
    <property type="entry name" value="Di-haem_cyt_TM"/>
</dbReference>
<dbReference type="PANTHER" id="PTHR19271">
    <property type="entry name" value="CYTOCHROME B"/>
    <property type="match status" value="1"/>
</dbReference>
<dbReference type="PANTHER" id="PTHR19271:SF16">
    <property type="entry name" value="CYTOCHROME B"/>
    <property type="match status" value="1"/>
</dbReference>
<dbReference type="Pfam" id="PF00032">
    <property type="entry name" value="Cytochrom_B_C"/>
    <property type="match status" value="1"/>
</dbReference>
<dbReference type="Pfam" id="PF00033">
    <property type="entry name" value="Cytochrome_B"/>
    <property type="match status" value="1"/>
</dbReference>
<dbReference type="PIRSF" id="PIRSF038885">
    <property type="entry name" value="COB"/>
    <property type="match status" value="1"/>
</dbReference>
<dbReference type="SUPFAM" id="SSF81648">
    <property type="entry name" value="a domain/subunit of cytochrome bc1 complex (Ubiquinol-cytochrome c reductase)"/>
    <property type="match status" value="1"/>
</dbReference>
<dbReference type="SUPFAM" id="SSF81342">
    <property type="entry name" value="Transmembrane di-heme cytochromes"/>
    <property type="match status" value="1"/>
</dbReference>
<dbReference type="PROSITE" id="PS51003">
    <property type="entry name" value="CYTB_CTER"/>
    <property type="match status" value="1"/>
</dbReference>
<dbReference type="PROSITE" id="PS51002">
    <property type="entry name" value="CYTB_NTER"/>
    <property type="match status" value="1"/>
</dbReference>
<organism>
    <name type="scientific">Glossophaga leachii</name>
    <name type="common">Gray's long-tongued bat</name>
    <dbReference type="NCBI Taxonomy" id="177160"/>
    <lineage>
        <taxon>Eukaryota</taxon>
        <taxon>Metazoa</taxon>
        <taxon>Chordata</taxon>
        <taxon>Craniata</taxon>
        <taxon>Vertebrata</taxon>
        <taxon>Euteleostomi</taxon>
        <taxon>Mammalia</taxon>
        <taxon>Eutheria</taxon>
        <taxon>Laurasiatheria</taxon>
        <taxon>Chiroptera</taxon>
        <taxon>Yangochiroptera</taxon>
        <taxon>Phyllostomidae</taxon>
        <taxon>Glossophaginae</taxon>
        <taxon>Glossophaga</taxon>
    </lineage>
</organism>